<keyword id="KW-0012">Acyltransferase</keyword>
<keyword id="KW-0997">Cell inner membrane</keyword>
<keyword id="KW-1003">Cell membrane</keyword>
<keyword id="KW-0444">Lipid biosynthesis</keyword>
<keyword id="KW-0443">Lipid metabolism</keyword>
<keyword id="KW-0472">Membrane</keyword>
<keyword id="KW-0594">Phospholipid biosynthesis</keyword>
<keyword id="KW-1208">Phospholipid metabolism</keyword>
<keyword id="KW-0808">Transferase</keyword>
<gene>
    <name evidence="1" type="primary">plsB</name>
    <name type="ordered locus">STY4431</name>
    <name type="ordered locus">t4141</name>
</gene>
<proteinExistence type="inferred from homology"/>
<name>PLSB_SALTI</name>
<comment type="catalytic activity">
    <reaction evidence="1">
        <text>sn-glycerol 3-phosphate + an acyl-CoA = a 1-acyl-sn-glycero-3-phosphate + CoA</text>
        <dbReference type="Rhea" id="RHEA:15325"/>
        <dbReference type="ChEBI" id="CHEBI:57287"/>
        <dbReference type="ChEBI" id="CHEBI:57597"/>
        <dbReference type="ChEBI" id="CHEBI:57970"/>
        <dbReference type="ChEBI" id="CHEBI:58342"/>
        <dbReference type="EC" id="2.3.1.15"/>
    </reaction>
</comment>
<comment type="pathway">
    <text evidence="1">Phospholipid metabolism; CDP-diacylglycerol biosynthesis; CDP-diacylglycerol from sn-glycerol 3-phosphate: step 1/3.</text>
</comment>
<comment type="subcellular location">
    <subcellularLocation>
        <location evidence="1">Cell inner membrane</location>
        <topology evidence="1">Peripheral membrane protein</topology>
        <orientation evidence="1">Cytoplasmic side</orientation>
    </subcellularLocation>
</comment>
<comment type="domain">
    <text evidence="1">The HXXXXD motif is essential for acyltransferase activity and may constitute the binding site for the phosphate moiety of the glycerol-3-phosphate.</text>
</comment>
<comment type="similarity">
    <text evidence="1">Belongs to the GPAT/DAPAT family.</text>
</comment>
<sequence length="806" mass="91241">MSGWPRIYYKLLNLPLSILVKSKSIPAEPAQELGLDTSRPIMYVLPYNSKADLLTLRAQCLAHDLPDPLEPLEIDGALLPRYVFIHGGPRVFTYYTPKEESVKLFHDYLDLHRSNPALDVQMVPVSVMFGRAPGREKGEENPPLRMLNGVQKFFAISWLGRDSFVRFSPSVSLRRMADEHGTDKIIAQKLARVARMHFARQRLAAVGPRLPARQDLFNKLLASKAIARAVEDEARSKKISHEKAQQNAIALMEEIAANFSYEMIRLTDRILGFTWNRLYQGINVHNAERVRQLAHDGHEIVYVPCHRSHMDYLLLSYVLYHQGLVPPHIAAGINLNFWPAGPIFRRLGAFFIRRTFKGNKLYSTVFREYLGELFSRGYSVEYFVEGGRSRTGRLLDPKTGTLSMTIQAMLRGGTRPITLVPIYIGYEHVMEVGTYAKELRGATKEKESLPQMLKGLSKLRNLGQGYVNFGEPMPLMTYLNQHVPEWRESIDPIEAIRPAWLTPTVNSIAADLMVRINNAGAANAMNLCCTALLASRQRSLTREQLTEQLDCYLDLMRNVPYSTDSTVPAASAGELIAHALQMNKFEVEKDTIGDIIILPREQAVLMTYYRNNIAHMLIMPSLMAAIITQHRRISRDALQQHVEALYPMLKAELFLRWEREELASVIDALASEMQRQGLITLQDDELHINPTHSRTLQLLAAGARETLQRYAITFWLLSANPSINRSTLEKESRTVAQRLSVLHGINAPEFFDKAVFSSLVLTLRDEGYISDTGDAEPAETMKIYQMLADLITSDVRLTIESATQGE</sequence>
<feature type="chain" id="PRO_0000195231" description="Glycerol-3-phosphate acyltransferase">
    <location>
        <begin position="1"/>
        <end position="806"/>
    </location>
</feature>
<feature type="short sequence motif" description="HXXXXD motif">
    <location>
        <begin position="306"/>
        <end position="311"/>
    </location>
</feature>
<protein>
    <recommendedName>
        <fullName evidence="1">Glycerol-3-phosphate acyltransferase</fullName>
        <shortName evidence="1">GPAT</shortName>
        <ecNumber evidence="1">2.3.1.15</ecNumber>
    </recommendedName>
</protein>
<dbReference type="EC" id="2.3.1.15" evidence="1"/>
<dbReference type="EMBL" id="AL513382">
    <property type="protein sequence ID" value="CAD09219.1"/>
    <property type="molecule type" value="Genomic_DNA"/>
</dbReference>
<dbReference type="EMBL" id="AE014613">
    <property type="protein sequence ID" value="AAO71605.1"/>
    <property type="molecule type" value="Genomic_DNA"/>
</dbReference>
<dbReference type="RefSeq" id="NP_458533.1">
    <property type="nucleotide sequence ID" value="NC_003198.1"/>
</dbReference>
<dbReference type="RefSeq" id="WP_000017366.1">
    <property type="nucleotide sequence ID" value="NZ_WSUR01000027.1"/>
</dbReference>
<dbReference type="SMR" id="Q8Z1T6"/>
<dbReference type="STRING" id="220341.gene:17588263"/>
<dbReference type="KEGG" id="stt:t4141"/>
<dbReference type="KEGG" id="sty:STY4431"/>
<dbReference type="PATRIC" id="fig|220341.7.peg.4531"/>
<dbReference type="eggNOG" id="COG2937">
    <property type="taxonomic scope" value="Bacteria"/>
</dbReference>
<dbReference type="HOGENOM" id="CLU_015407_0_0_6"/>
<dbReference type="OMA" id="EVIYVPC"/>
<dbReference type="OrthoDB" id="335193at2"/>
<dbReference type="UniPathway" id="UPA00557">
    <property type="reaction ID" value="UER00612"/>
</dbReference>
<dbReference type="Proteomes" id="UP000000541">
    <property type="component" value="Chromosome"/>
</dbReference>
<dbReference type="Proteomes" id="UP000002670">
    <property type="component" value="Chromosome"/>
</dbReference>
<dbReference type="GO" id="GO:0005886">
    <property type="term" value="C:plasma membrane"/>
    <property type="evidence" value="ECO:0007669"/>
    <property type="project" value="UniProtKB-SubCell"/>
</dbReference>
<dbReference type="GO" id="GO:0004366">
    <property type="term" value="F:glycerol-3-phosphate O-acyltransferase activity"/>
    <property type="evidence" value="ECO:0007669"/>
    <property type="project" value="UniProtKB-UniRule"/>
</dbReference>
<dbReference type="GO" id="GO:0016024">
    <property type="term" value="P:CDP-diacylglycerol biosynthetic process"/>
    <property type="evidence" value="ECO:0007669"/>
    <property type="project" value="UniProtKB-UniRule"/>
</dbReference>
<dbReference type="GO" id="GO:0006631">
    <property type="term" value="P:fatty acid metabolic process"/>
    <property type="evidence" value="ECO:0007669"/>
    <property type="project" value="TreeGrafter"/>
</dbReference>
<dbReference type="CDD" id="cd07993">
    <property type="entry name" value="LPLAT_DHAPAT-like"/>
    <property type="match status" value="1"/>
</dbReference>
<dbReference type="HAMAP" id="MF_00393">
    <property type="entry name" value="Glyc3P_acyltrans"/>
    <property type="match status" value="1"/>
</dbReference>
<dbReference type="InterPro" id="IPR022284">
    <property type="entry name" value="GPAT/DHAPAT"/>
</dbReference>
<dbReference type="InterPro" id="IPR045520">
    <property type="entry name" value="GPAT/DHAPAT_C"/>
</dbReference>
<dbReference type="InterPro" id="IPR041728">
    <property type="entry name" value="GPAT/DHAPAT_LPLAT"/>
</dbReference>
<dbReference type="InterPro" id="IPR028354">
    <property type="entry name" value="GPAT_PlsB"/>
</dbReference>
<dbReference type="InterPro" id="IPR002123">
    <property type="entry name" value="Plipid/glycerol_acylTrfase"/>
</dbReference>
<dbReference type="NCBIfam" id="TIGR03703">
    <property type="entry name" value="plsB"/>
    <property type="match status" value="1"/>
</dbReference>
<dbReference type="NCBIfam" id="NF003441">
    <property type="entry name" value="PRK04974.1"/>
    <property type="match status" value="1"/>
</dbReference>
<dbReference type="PANTHER" id="PTHR12563:SF17">
    <property type="entry name" value="DIHYDROXYACETONE PHOSPHATE ACYLTRANSFERASE"/>
    <property type="match status" value="1"/>
</dbReference>
<dbReference type="PANTHER" id="PTHR12563">
    <property type="entry name" value="GLYCEROL-3-PHOSPHATE ACYLTRANSFERASE"/>
    <property type="match status" value="1"/>
</dbReference>
<dbReference type="Pfam" id="PF01553">
    <property type="entry name" value="Acyltransferase"/>
    <property type="match status" value="1"/>
</dbReference>
<dbReference type="Pfam" id="PF19277">
    <property type="entry name" value="GPAT_C"/>
    <property type="match status" value="1"/>
</dbReference>
<dbReference type="PIRSF" id="PIRSF500064">
    <property type="entry name" value="GPAT"/>
    <property type="match status" value="1"/>
</dbReference>
<dbReference type="PIRSF" id="PIRSF000437">
    <property type="entry name" value="GPAT_DHAPAT"/>
    <property type="match status" value="1"/>
</dbReference>
<dbReference type="SMART" id="SM00563">
    <property type="entry name" value="PlsC"/>
    <property type="match status" value="1"/>
</dbReference>
<dbReference type="SUPFAM" id="SSF69593">
    <property type="entry name" value="Glycerol-3-phosphate (1)-acyltransferase"/>
    <property type="match status" value="1"/>
</dbReference>
<organism>
    <name type="scientific">Salmonella typhi</name>
    <dbReference type="NCBI Taxonomy" id="90370"/>
    <lineage>
        <taxon>Bacteria</taxon>
        <taxon>Pseudomonadati</taxon>
        <taxon>Pseudomonadota</taxon>
        <taxon>Gammaproteobacteria</taxon>
        <taxon>Enterobacterales</taxon>
        <taxon>Enterobacteriaceae</taxon>
        <taxon>Salmonella</taxon>
    </lineage>
</organism>
<accession>Q8Z1T6</accession>
<evidence type="ECO:0000255" key="1">
    <source>
        <dbReference type="HAMAP-Rule" id="MF_00393"/>
    </source>
</evidence>
<reference key="1">
    <citation type="journal article" date="2001" name="Nature">
        <title>Complete genome sequence of a multiple drug resistant Salmonella enterica serovar Typhi CT18.</title>
        <authorList>
            <person name="Parkhill J."/>
            <person name="Dougan G."/>
            <person name="James K.D."/>
            <person name="Thomson N.R."/>
            <person name="Pickard D."/>
            <person name="Wain J."/>
            <person name="Churcher C.M."/>
            <person name="Mungall K.L."/>
            <person name="Bentley S.D."/>
            <person name="Holden M.T.G."/>
            <person name="Sebaihia M."/>
            <person name="Baker S."/>
            <person name="Basham D."/>
            <person name="Brooks K."/>
            <person name="Chillingworth T."/>
            <person name="Connerton P."/>
            <person name="Cronin A."/>
            <person name="Davis P."/>
            <person name="Davies R.M."/>
            <person name="Dowd L."/>
            <person name="White N."/>
            <person name="Farrar J."/>
            <person name="Feltwell T."/>
            <person name="Hamlin N."/>
            <person name="Haque A."/>
            <person name="Hien T.T."/>
            <person name="Holroyd S."/>
            <person name="Jagels K."/>
            <person name="Krogh A."/>
            <person name="Larsen T.S."/>
            <person name="Leather S."/>
            <person name="Moule S."/>
            <person name="O'Gaora P."/>
            <person name="Parry C."/>
            <person name="Quail M.A."/>
            <person name="Rutherford K.M."/>
            <person name="Simmonds M."/>
            <person name="Skelton J."/>
            <person name="Stevens K."/>
            <person name="Whitehead S."/>
            <person name="Barrell B.G."/>
        </authorList>
    </citation>
    <scope>NUCLEOTIDE SEQUENCE [LARGE SCALE GENOMIC DNA]</scope>
    <source>
        <strain>CT18</strain>
    </source>
</reference>
<reference key="2">
    <citation type="journal article" date="2003" name="J. Bacteriol.">
        <title>Comparative genomics of Salmonella enterica serovar Typhi strains Ty2 and CT18.</title>
        <authorList>
            <person name="Deng W."/>
            <person name="Liou S.-R."/>
            <person name="Plunkett G. III"/>
            <person name="Mayhew G.F."/>
            <person name="Rose D.J."/>
            <person name="Burland V."/>
            <person name="Kodoyianni V."/>
            <person name="Schwartz D.C."/>
            <person name="Blattner F.R."/>
        </authorList>
    </citation>
    <scope>NUCLEOTIDE SEQUENCE [LARGE SCALE GENOMIC DNA]</scope>
    <source>
        <strain>ATCC 700931 / Ty2</strain>
    </source>
</reference>